<keyword id="KW-0004">4Fe-4S</keyword>
<keyword id="KW-0963">Cytoplasm</keyword>
<keyword id="KW-1015">Disulfide bond</keyword>
<keyword id="KW-0408">Iron</keyword>
<keyword id="KW-0411">Iron-sulfur</keyword>
<keyword id="KW-0479">Metal-binding</keyword>
<keyword id="KW-0489">Methyltransferase</keyword>
<keyword id="KW-1185">Reference proteome</keyword>
<keyword id="KW-0698">rRNA processing</keyword>
<keyword id="KW-0949">S-adenosyl-L-methionine</keyword>
<keyword id="KW-0808">Transferase</keyword>
<keyword id="KW-0819">tRNA processing</keyword>
<protein>
    <recommendedName>
        <fullName evidence="1">Dual-specificity RNA methyltransferase RlmN</fullName>
        <ecNumber evidence="1">2.1.1.192</ecNumber>
    </recommendedName>
    <alternativeName>
        <fullName evidence="1">23S rRNA (adenine(2503)-C(2))-methyltransferase</fullName>
    </alternativeName>
    <alternativeName>
        <fullName evidence="1">23S rRNA m2A2503 methyltransferase</fullName>
    </alternativeName>
    <alternativeName>
        <fullName evidence="1">Ribosomal RNA large subunit methyltransferase N</fullName>
    </alternativeName>
    <alternativeName>
        <fullName evidence="1">tRNA (adenine(37)-C(2))-methyltransferase</fullName>
    </alternativeName>
    <alternativeName>
        <fullName evidence="1">tRNA m2A37 methyltransferase</fullName>
    </alternativeName>
</protein>
<evidence type="ECO:0000255" key="1">
    <source>
        <dbReference type="HAMAP-Rule" id="MF_01849"/>
    </source>
</evidence>
<evidence type="ECO:0000255" key="2">
    <source>
        <dbReference type="PROSITE-ProRule" id="PRU01266"/>
    </source>
</evidence>
<gene>
    <name evidence="1" type="primary">rlmN</name>
    <name type="ordered locus">BMA1347</name>
</gene>
<reference key="1">
    <citation type="journal article" date="2004" name="Proc. Natl. Acad. Sci. U.S.A.">
        <title>Structural flexibility in the Burkholderia mallei genome.</title>
        <authorList>
            <person name="Nierman W.C."/>
            <person name="DeShazer D."/>
            <person name="Kim H.S."/>
            <person name="Tettelin H."/>
            <person name="Nelson K.E."/>
            <person name="Feldblyum T.V."/>
            <person name="Ulrich R.L."/>
            <person name="Ronning C.M."/>
            <person name="Brinkac L.M."/>
            <person name="Daugherty S.C."/>
            <person name="Davidsen T.D."/>
            <person name="DeBoy R.T."/>
            <person name="Dimitrov G."/>
            <person name="Dodson R.J."/>
            <person name="Durkin A.S."/>
            <person name="Gwinn M.L."/>
            <person name="Haft D.H."/>
            <person name="Khouri H.M."/>
            <person name="Kolonay J.F."/>
            <person name="Madupu R."/>
            <person name="Mohammoud Y."/>
            <person name="Nelson W.C."/>
            <person name="Radune D."/>
            <person name="Romero C.M."/>
            <person name="Sarria S."/>
            <person name="Selengut J."/>
            <person name="Shamblin C."/>
            <person name="Sullivan S.A."/>
            <person name="White O."/>
            <person name="Yu Y."/>
            <person name="Zafar N."/>
            <person name="Zhou L."/>
            <person name="Fraser C.M."/>
        </authorList>
    </citation>
    <scope>NUCLEOTIDE SEQUENCE [LARGE SCALE GENOMIC DNA]</scope>
    <source>
        <strain>ATCC 23344</strain>
    </source>
</reference>
<comment type="function">
    <text evidence="1">Specifically methylates position 2 of adenine 2503 in 23S rRNA and position 2 of adenine 37 in tRNAs. m2A2503 modification seems to play a crucial role in the proofreading step occurring at the peptidyl transferase center and thus would serve to optimize ribosomal fidelity.</text>
</comment>
<comment type="catalytic activity">
    <reaction evidence="1">
        <text>adenosine(2503) in 23S rRNA + 2 reduced [2Fe-2S]-[ferredoxin] + 2 S-adenosyl-L-methionine = 2-methyladenosine(2503) in 23S rRNA + 5'-deoxyadenosine + L-methionine + 2 oxidized [2Fe-2S]-[ferredoxin] + S-adenosyl-L-homocysteine</text>
        <dbReference type="Rhea" id="RHEA:42916"/>
        <dbReference type="Rhea" id="RHEA-COMP:10000"/>
        <dbReference type="Rhea" id="RHEA-COMP:10001"/>
        <dbReference type="Rhea" id="RHEA-COMP:10152"/>
        <dbReference type="Rhea" id="RHEA-COMP:10282"/>
        <dbReference type="ChEBI" id="CHEBI:17319"/>
        <dbReference type="ChEBI" id="CHEBI:33737"/>
        <dbReference type="ChEBI" id="CHEBI:33738"/>
        <dbReference type="ChEBI" id="CHEBI:57844"/>
        <dbReference type="ChEBI" id="CHEBI:57856"/>
        <dbReference type="ChEBI" id="CHEBI:59789"/>
        <dbReference type="ChEBI" id="CHEBI:74411"/>
        <dbReference type="ChEBI" id="CHEBI:74497"/>
        <dbReference type="EC" id="2.1.1.192"/>
    </reaction>
</comment>
<comment type="catalytic activity">
    <reaction evidence="1">
        <text>adenosine(37) in tRNA + 2 reduced [2Fe-2S]-[ferredoxin] + 2 S-adenosyl-L-methionine = 2-methyladenosine(37) in tRNA + 5'-deoxyadenosine + L-methionine + 2 oxidized [2Fe-2S]-[ferredoxin] + S-adenosyl-L-homocysteine</text>
        <dbReference type="Rhea" id="RHEA:43332"/>
        <dbReference type="Rhea" id="RHEA-COMP:10000"/>
        <dbReference type="Rhea" id="RHEA-COMP:10001"/>
        <dbReference type="Rhea" id="RHEA-COMP:10162"/>
        <dbReference type="Rhea" id="RHEA-COMP:10485"/>
        <dbReference type="ChEBI" id="CHEBI:17319"/>
        <dbReference type="ChEBI" id="CHEBI:33737"/>
        <dbReference type="ChEBI" id="CHEBI:33738"/>
        <dbReference type="ChEBI" id="CHEBI:57844"/>
        <dbReference type="ChEBI" id="CHEBI:57856"/>
        <dbReference type="ChEBI" id="CHEBI:59789"/>
        <dbReference type="ChEBI" id="CHEBI:74411"/>
        <dbReference type="ChEBI" id="CHEBI:74497"/>
        <dbReference type="EC" id="2.1.1.192"/>
    </reaction>
</comment>
<comment type="cofactor">
    <cofactor evidence="1">
        <name>[4Fe-4S] cluster</name>
        <dbReference type="ChEBI" id="CHEBI:49883"/>
    </cofactor>
    <text evidence="1">Binds 1 [4Fe-4S] cluster. The cluster is coordinated with 3 cysteines and an exchangeable S-adenosyl-L-methionine.</text>
</comment>
<comment type="subcellular location">
    <subcellularLocation>
        <location evidence="1">Cytoplasm</location>
    </subcellularLocation>
</comment>
<comment type="miscellaneous">
    <text evidence="1">Reaction proceeds by a ping-pong mechanism involving intermediate methylation of a conserved cysteine residue.</text>
</comment>
<comment type="similarity">
    <text evidence="1">Belongs to the radical SAM superfamily. RlmN family.</text>
</comment>
<dbReference type="EC" id="2.1.1.192" evidence="1"/>
<dbReference type="EMBL" id="CP000010">
    <property type="protein sequence ID" value="AAU47569.1"/>
    <property type="molecule type" value="Genomic_DNA"/>
</dbReference>
<dbReference type="RefSeq" id="WP_004192451.1">
    <property type="nucleotide sequence ID" value="NC_006348.1"/>
</dbReference>
<dbReference type="RefSeq" id="YP_103007.1">
    <property type="nucleotide sequence ID" value="NC_006348.1"/>
</dbReference>
<dbReference type="SMR" id="Q62JW2"/>
<dbReference type="GeneID" id="93060478"/>
<dbReference type="KEGG" id="bma:BMA1347"/>
<dbReference type="PATRIC" id="fig|243160.12.peg.1386"/>
<dbReference type="eggNOG" id="COG0820">
    <property type="taxonomic scope" value="Bacteria"/>
</dbReference>
<dbReference type="HOGENOM" id="CLU_029101_0_0_4"/>
<dbReference type="Proteomes" id="UP000006693">
    <property type="component" value="Chromosome 1"/>
</dbReference>
<dbReference type="GO" id="GO:0005737">
    <property type="term" value="C:cytoplasm"/>
    <property type="evidence" value="ECO:0007669"/>
    <property type="project" value="UniProtKB-SubCell"/>
</dbReference>
<dbReference type="GO" id="GO:0051539">
    <property type="term" value="F:4 iron, 4 sulfur cluster binding"/>
    <property type="evidence" value="ECO:0007669"/>
    <property type="project" value="UniProtKB-UniRule"/>
</dbReference>
<dbReference type="GO" id="GO:0046872">
    <property type="term" value="F:metal ion binding"/>
    <property type="evidence" value="ECO:0007669"/>
    <property type="project" value="UniProtKB-KW"/>
</dbReference>
<dbReference type="GO" id="GO:0070040">
    <property type="term" value="F:rRNA (adenine(2503)-C2-)-methyltransferase activity"/>
    <property type="evidence" value="ECO:0007669"/>
    <property type="project" value="UniProtKB-UniRule"/>
</dbReference>
<dbReference type="GO" id="GO:0019843">
    <property type="term" value="F:rRNA binding"/>
    <property type="evidence" value="ECO:0007669"/>
    <property type="project" value="UniProtKB-UniRule"/>
</dbReference>
<dbReference type="GO" id="GO:0002935">
    <property type="term" value="F:tRNA (adenine(37)-C2)-methyltransferase activity"/>
    <property type="evidence" value="ECO:0007669"/>
    <property type="project" value="UniProtKB-UniRule"/>
</dbReference>
<dbReference type="GO" id="GO:0000049">
    <property type="term" value="F:tRNA binding"/>
    <property type="evidence" value="ECO:0007669"/>
    <property type="project" value="UniProtKB-UniRule"/>
</dbReference>
<dbReference type="GO" id="GO:0070475">
    <property type="term" value="P:rRNA base methylation"/>
    <property type="evidence" value="ECO:0007669"/>
    <property type="project" value="UniProtKB-UniRule"/>
</dbReference>
<dbReference type="GO" id="GO:0030488">
    <property type="term" value="P:tRNA methylation"/>
    <property type="evidence" value="ECO:0007669"/>
    <property type="project" value="UniProtKB-UniRule"/>
</dbReference>
<dbReference type="CDD" id="cd01335">
    <property type="entry name" value="Radical_SAM"/>
    <property type="match status" value="1"/>
</dbReference>
<dbReference type="FunFam" id="1.10.150.530:FF:000003">
    <property type="entry name" value="Dual-specificity RNA methyltransferase RlmN"/>
    <property type="match status" value="1"/>
</dbReference>
<dbReference type="FunFam" id="3.20.20.70:FF:000008">
    <property type="entry name" value="Dual-specificity RNA methyltransferase RlmN"/>
    <property type="match status" value="1"/>
</dbReference>
<dbReference type="Gene3D" id="1.10.150.530">
    <property type="match status" value="1"/>
</dbReference>
<dbReference type="Gene3D" id="3.20.20.70">
    <property type="entry name" value="Aldolase class I"/>
    <property type="match status" value="1"/>
</dbReference>
<dbReference type="HAMAP" id="MF_01849">
    <property type="entry name" value="RNA_methyltr_RlmN"/>
    <property type="match status" value="1"/>
</dbReference>
<dbReference type="InterPro" id="IPR013785">
    <property type="entry name" value="Aldolase_TIM"/>
</dbReference>
<dbReference type="InterPro" id="IPR040072">
    <property type="entry name" value="Methyltransferase_A"/>
</dbReference>
<dbReference type="InterPro" id="IPR048641">
    <property type="entry name" value="RlmN_N"/>
</dbReference>
<dbReference type="InterPro" id="IPR027492">
    <property type="entry name" value="RNA_MTrfase_RlmN"/>
</dbReference>
<dbReference type="InterPro" id="IPR004383">
    <property type="entry name" value="rRNA_lsu_MTrfase_RlmN/Cfr"/>
</dbReference>
<dbReference type="InterPro" id="IPR007197">
    <property type="entry name" value="rSAM"/>
</dbReference>
<dbReference type="NCBIfam" id="TIGR00048">
    <property type="entry name" value="rRNA_mod_RlmN"/>
    <property type="match status" value="1"/>
</dbReference>
<dbReference type="PANTHER" id="PTHR30544">
    <property type="entry name" value="23S RRNA METHYLTRANSFERASE"/>
    <property type="match status" value="1"/>
</dbReference>
<dbReference type="PANTHER" id="PTHR30544:SF5">
    <property type="entry name" value="RADICAL SAM CORE DOMAIN-CONTAINING PROTEIN"/>
    <property type="match status" value="1"/>
</dbReference>
<dbReference type="Pfam" id="PF04055">
    <property type="entry name" value="Radical_SAM"/>
    <property type="match status" value="1"/>
</dbReference>
<dbReference type="Pfam" id="PF21016">
    <property type="entry name" value="RlmN_N"/>
    <property type="match status" value="1"/>
</dbReference>
<dbReference type="PIRSF" id="PIRSF006004">
    <property type="entry name" value="CHP00048"/>
    <property type="match status" value="1"/>
</dbReference>
<dbReference type="SFLD" id="SFLDF00275">
    <property type="entry name" value="adenosine_C2_methyltransferase"/>
    <property type="match status" value="1"/>
</dbReference>
<dbReference type="SFLD" id="SFLDG01062">
    <property type="entry name" value="methyltransferase_(Class_A)"/>
    <property type="match status" value="1"/>
</dbReference>
<dbReference type="SUPFAM" id="SSF102114">
    <property type="entry name" value="Radical SAM enzymes"/>
    <property type="match status" value="1"/>
</dbReference>
<dbReference type="PROSITE" id="PS51918">
    <property type="entry name" value="RADICAL_SAM"/>
    <property type="match status" value="1"/>
</dbReference>
<sequence length="378" mass="41131">MAGETIVNLLDLDAEGLVAYCGSLGEKAFRAKQLQRWIHQYNAADFDGMTDLAKSLREKLKGRAVIGTPDILSDHVSADGTRKWLINVGNGNAVETVFIPEETRGTLCVSSQAGCAVNCRFCSTGKQGFSRNLSTGEIVGQLRMAEFALRASLGRAPGPNGKAERVITNVVMMGMGEPLLNYSAVVPAMRLMLDDNAYGLSRRRVTLSTSGVVPMMDRLGAELPVALAVSLHAPNDALRDELVPLNKKHPLRELMAACQRYLKVAPRDFITFEYCMLDGVNDTEAHARELLAVTRDVPCKFNLIPFNPFPESGLVRSKTEQIKRFAQVLIDAGVVTTIRKTRGDDIDAACGQLAGAVKDRTRLAERTGASKIIEVRAV</sequence>
<name>RLMN_BURMA</name>
<accession>Q62JW2</accession>
<feature type="chain" id="PRO_0000350075" description="Dual-specificity RNA methyltransferase RlmN">
    <location>
        <begin position="1"/>
        <end position="378"/>
    </location>
</feature>
<feature type="domain" description="Radical SAM core" evidence="2">
    <location>
        <begin position="101"/>
        <end position="345"/>
    </location>
</feature>
<feature type="active site" description="Proton acceptor" evidence="1">
    <location>
        <position position="95"/>
    </location>
</feature>
<feature type="active site" description="S-methylcysteine intermediate" evidence="1">
    <location>
        <position position="350"/>
    </location>
</feature>
<feature type="binding site" evidence="1">
    <location>
        <position position="115"/>
    </location>
    <ligand>
        <name>[4Fe-4S] cluster</name>
        <dbReference type="ChEBI" id="CHEBI:49883"/>
        <note>4Fe-4S-S-AdoMet</note>
    </ligand>
</feature>
<feature type="binding site" evidence="1">
    <location>
        <position position="119"/>
    </location>
    <ligand>
        <name>[4Fe-4S] cluster</name>
        <dbReference type="ChEBI" id="CHEBI:49883"/>
        <note>4Fe-4S-S-AdoMet</note>
    </ligand>
</feature>
<feature type="binding site" evidence="1">
    <location>
        <position position="122"/>
    </location>
    <ligand>
        <name>[4Fe-4S] cluster</name>
        <dbReference type="ChEBI" id="CHEBI:49883"/>
        <note>4Fe-4S-S-AdoMet</note>
    </ligand>
</feature>
<feature type="binding site" evidence="1">
    <location>
        <begin position="176"/>
        <end position="177"/>
    </location>
    <ligand>
        <name>S-adenosyl-L-methionine</name>
        <dbReference type="ChEBI" id="CHEBI:59789"/>
    </ligand>
</feature>
<feature type="binding site" evidence="1">
    <location>
        <position position="208"/>
    </location>
    <ligand>
        <name>S-adenosyl-L-methionine</name>
        <dbReference type="ChEBI" id="CHEBI:59789"/>
    </ligand>
</feature>
<feature type="binding site" evidence="1">
    <location>
        <begin position="230"/>
        <end position="232"/>
    </location>
    <ligand>
        <name>S-adenosyl-L-methionine</name>
        <dbReference type="ChEBI" id="CHEBI:59789"/>
    </ligand>
</feature>
<feature type="binding site" evidence="1">
    <location>
        <position position="307"/>
    </location>
    <ligand>
        <name>S-adenosyl-L-methionine</name>
        <dbReference type="ChEBI" id="CHEBI:59789"/>
    </ligand>
</feature>
<feature type="disulfide bond" description="(transient)" evidence="1">
    <location>
        <begin position="108"/>
        <end position="350"/>
    </location>
</feature>
<proteinExistence type="inferred from homology"/>
<organism>
    <name type="scientific">Burkholderia mallei (strain ATCC 23344)</name>
    <dbReference type="NCBI Taxonomy" id="243160"/>
    <lineage>
        <taxon>Bacteria</taxon>
        <taxon>Pseudomonadati</taxon>
        <taxon>Pseudomonadota</taxon>
        <taxon>Betaproteobacteria</taxon>
        <taxon>Burkholderiales</taxon>
        <taxon>Burkholderiaceae</taxon>
        <taxon>Burkholderia</taxon>
        <taxon>pseudomallei group</taxon>
    </lineage>
</organism>